<keyword id="KW-0240">DNA-directed RNA polymerase</keyword>
<keyword id="KW-0548">Nucleotidyltransferase</keyword>
<keyword id="KW-1185">Reference proteome</keyword>
<keyword id="KW-0804">Transcription</keyword>
<keyword id="KW-0808">Transferase</keyword>
<organism>
    <name type="scientific">Aquifex aeolicus (strain VF5)</name>
    <dbReference type="NCBI Taxonomy" id="224324"/>
    <lineage>
        <taxon>Bacteria</taxon>
        <taxon>Pseudomonadati</taxon>
        <taxon>Aquificota</taxon>
        <taxon>Aquificia</taxon>
        <taxon>Aquificales</taxon>
        <taxon>Aquificaceae</taxon>
        <taxon>Aquifex</taxon>
    </lineage>
</organism>
<gene>
    <name evidence="1" type="primary">rpoA</name>
    <name type="ordered locus">aq_070</name>
</gene>
<dbReference type="EC" id="2.7.7.6" evidence="1"/>
<dbReference type="EMBL" id="AE000657">
    <property type="protein sequence ID" value="AAC06440.1"/>
    <property type="molecule type" value="Genomic_DNA"/>
</dbReference>
<dbReference type="PIR" id="H70306">
    <property type="entry name" value="H70306"/>
</dbReference>
<dbReference type="RefSeq" id="NP_213043.1">
    <property type="nucleotide sequence ID" value="NC_000918.1"/>
</dbReference>
<dbReference type="RefSeq" id="WP_010879981.1">
    <property type="nucleotide sequence ID" value="NC_000918.1"/>
</dbReference>
<dbReference type="SMR" id="O66483"/>
<dbReference type="FunCoup" id="O66483">
    <property type="interactions" value="433"/>
</dbReference>
<dbReference type="STRING" id="224324.aq_070"/>
<dbReference type="EnsemblBacteria" id="AAC06440">
    <property type="protein sequence ID" value="AAC06440"/>
    <property type="gene ID" value="aq_070"/>
</dbReference>
<dbReference type="KEGG" id="aae:aq_070"/>
<dbReference type="PATRIC" id="fig|224324.8.peg.61"/>
<dbReference type="eggNOG" id="COG0202">
    <property type="taxonomic scope" value="Bacteria"/>
</dbReference>
<dbReference type="HOGENOM" id="CLU_053084_0_1_0"/>
<dbReference type="InParanoid" id="O66483"/>
<dbReference type="OrthoDB" id="9805706at2"/>
<dbReference type="Proteomes" id="UP000000798">
    <property type="component" value="Chromosome"/>
</dbReference>
<dbReference type="GO" id="GO:0005737">
    <property type="term" value="C:cytoplasm"/>
    <property type="evidence" value="ECO:0000318"/>
    <property type="project" value="GO_Central"/>
</dbReference>
<dbReference type="GO" id="GO:0000428">
    <property type="term" value="C:DNA-directed RNA polymerase complex"/>
    <property type="evidence" value="ECO:0007669"/>
    <property type="project" value="UniProtKB-KW"/>
</dbReference>
<dbReference type="GO" id="GO:0003677">
    <property type="term" value="F:DNA binding"/>
    <property type="evidence" value="ECO:0007669"/>
    <property type="project" value="UniProtKB-UniRule"/>
</dbReference>
<dbReference type="GO" id="GO:0003899">
    <property type="term" value="F:DNA-directed RNA polymerase activity"/>
    <property type="evidence" value="ECO:0007669"/>
    <property type="project" value="UniProtKB-UniRule"/>
</dbReference>
<dbReference type="GO" id="GO:0046983">
    <property type="term" value="F:protein dimerization activity"/>
    <property type="evidence" value="ECO:0007669"/>
    <property type="project" value="InterPro"/>
</dbReference>
<dbReference type="GO" id="GO:0006351">
    <property type="term" value="P:DNA-templated transcription"/>
    <property type="evidence" value="ECO:0007669"/>
    <property type="project" value="UniProtKB-UniRule"/>
</dbReference>
<dbReference type="CDD" id="cd06928">
    <property type="entry name" value="RNAP_alpha_NTD"/>
    <property type="match status" value="1"/>
</dbReference>
<dbReference type="FunFam" id="2.170.120.12:FF:000001">
    <property type="entry name" value="DNA-directed RNA polymerase subunit alpha"/>
    <property type="match status" value="1"/>
</dbReference>
<dbReference type="Gene3D" id="1.10.150.20">
    <property type="entry name" value="5' to 3' exonuclease, C-terminal subdomain"/>
    <property type="match status" value="1"/>
</dbReference>
<dbReference type="Gene3D" id="2.170.120.12">
    <property type="entry name" value="DNA-directed RNA polymerase, insert domain"/>
    <property type="match status" value="1"/>
</dbReference>
<dbReference type="Gene3D" id="3.30.1360.10">
    <property type="entry name" value="RNA polymerase, RBP11-like subunit"/>
    <property type="match status" value="1"/>
</dbReference>
<dbReference type="HAMAP" id="MF_00059">
    <property type="entry name" value="RNApol_bact_RpoA"/>
    <property type="match status" value="1"/>
</dbReference>
<dbReference type="InterPro" id="IPR011262">
    <property type="entry name" value="DNA-dir_RNA_pol_insert"/>
</dbReference>
<dbReference type="InterPro" id="IPR011263">
    <property type="entry name" value="DNA-dir_RNA_pol_RpoA/D/Rpb3"/>
</dbReference>
<dbReference type="InterPro" id="IPR011773">
    <property type="entry name" value="DNA-dir_RpoA"/>
</dbReference>
<dbReference type="InterPro" id="IPR036603">
    <property type="entry name" value="RBP11-like"/>
</dbReference>
<dbReference type="InterPro" id="IPR011260">
    <property type="entry name" value="RNAP_asu_C"/>
</dbReference>
<dbReference type="InterPro" id="IPR036643">
    <property type="entry name" value="RNApol_insert_sf"/>
</dbReference>
<dbReference type="NCBIfam" id="NF003513">
    <property type="entry name" value="PRK05182.1-2"/>
    <property type="match status" value="1"/>
</dbReference>
<dbReference type="NCBIfam" id="NF003519">
    <property type="entry name" value="PRK05182.2-5"/>
    <property type="match status" value="1"/>
</dbReference>
<dbReference type="NCBIfam" id="TIGR02027">
    <property type="entry name" value="rpoA"/>
    <property type="match status" value="1"/>
</dbReference>
<dbReference type="Pfam" id="PF01000">
    <property type="entry name" value="RNA_pol_A_bac"/>
    <property type="match status" value="1"/>
</dbReference>
<dbReference type="Pfam" id="PF03118">
    <property type="entry name" value="RNA_pol_A_CTD"/>
    <property type="match status" value="1"/>
</dbReference>
<dbReference type="Pfam" id="PF01193">
    <property type="entry name" value="RNA_pol_L"/>
    <property type="match status" value="1"/>
</dbReference>
<dbReference type="SMART" id="SM00662">
    <property type="entry name" value="RPOLD"/>
    <property type="match status" value="1"/>
</dbReference>
<dbReference type="SUPFAM" id="SSF47789">
    <property type="entry name" value="C-terminal domain of RNA polymerase alpha subunit"/>
    <property type="match status" value="1"/>
</dbReference>
<dbReference type="SUPFAM" id="SSF56553">
    <property type="entry name" value="Insert subdomain of RNA polymerase alpha subunit"/>
    <property type="match status" value="1"/>
</dbReference>
<dbReference type="SUPFAM" id="SSF55257">
    <property type="entry name" value="RBP11-like subunits of RNA polymerase"/>
    <property type="match status" value="1"/>
</dbReference>
<accession>O66483</accession>
<proteinExistence type="inferred from homology"/>
<comment type="function">
    <text evidence="1">DNA-dependent RNA polymerase catalyzes the transcription of DNA into RNA using the four ribonucleoside triphosphates as substrates.</text>
</comment>
<comment type="catalytic activity">
    <reaction evidence="1">
        <text>RNA(n) + a ribonucleoside 5'-triphosphate = RNA(n+1) + diphosphate</text>
        <dbReference type="Rhea" id="RHEA:21248"/>
        <dbReference type="Rhea" id="RHEA-COMP:14527"/>
        <dbReference type="Rhea" id="RHEA-COMP:17342"/>
        <dbReference type="ChEBI" id="CHEBI:33019"/>
        <dbReference type="ChEBI" id="CHEBI:61557"/>
        <dbReference type="ChEBI" id="CHEBI:140395"/>
        <dbReference type="EC" id="2.7.7.6"/>
    </reaction>
</comment>
<comment type="subunit">
    <text evidence="1">Homodimer. The RNAP catalytic core consists of 2 alpha, 1 beta, 1 beta' and 1 omega subunit. When a sigma factor is associated with the core the holoenzyme is formed, which can initiate transcription.</text>
</comment>
<comment type="domain">
    <text evidence="1">The N-terminal domain is essential for RNAP assembly and basal transcription, whereas the C-terminal domain is involved in interaction with transcriptional regulators and with upstream promoter elements.</text>
</comment>
<comment type="similarity">
    <text evidence="1">Belongs to the RNA polymerase alpha chain family.</text>
</comment>
<evidence type="ECO:0000255" key="1">
    <source>
        <dbReference type="HAMAP-Rule" id="MF_00059"/>
    </source>
</evidence>
<feature type="chain" id="PRO_0000175256" description="DNA-directed RNA polymerase subunit alpha">
    <location>
        <begin position="1"/>
        <end position="317"/>
    </location>
</feature>
<feature type="region of interest" description="Alpha N-terminal domain (alpha-NTD)" evidence="1">
    <location>
        <begin position="1"/>
        <end position="229"/>
    </location>
</feature>
<feature type="region of interest" description="Alpha C-terminal domain (alpha-CTD)" evidence="1">
    <location>
        <begin position="245"/>
        <end position="317"/>
    </location>
</feature>
<sequence length="317" mass="35768">MLNEFIYPDKIFWEEKTDTYGRLVVEPLERGFGTTVGNSLRRVLLSSISGTAITAVKIYGIYHEFSAIEGVQEDAIELIANLKKIKFLMKGDSDVEILYLQKKGEGEVKASDIKTPPNVEILNPDQYIATITDPNKELNIEIRVERGRGYVPVEEMEAIGEVGWILVDADFSPVKKVGFRVDNVRVGKKSTYERLTLEIFTNGIKTPDQCMQEAIEILKKHYELLENIFTEKPTVPQKVAVDELAEKLSLSIEELDISQRALNSLKRIGITTIGDLVRMTEDELKSTKNIGRKALAEIKEALHKLGLELGMNIETQR</sequence>
<reference key="1">
    <citation type="journal article" date="1998" name="Nature">
        <title>The complete genome of the hyperthermophilic bacterium Aquifex aeolicus.</title>
        <authorList>
            <person name="Deckert G."/>
            <person name="Warren P.V."/>
            <person name="Gaasterland T."/>
            <person name="Young W.G."/>
            <person name="Lenox A.L."/>
            <person name="Graham D.E."/>
            <person name="Overbeek R."/>
            <person name="Snead M.A."/>
            <person name="Keller M."/>
            <person name="Aujay M."/>
            <person name="Huber R."/>
            <person name="Feldman R.A."/>
            <person name="Short J.M."/>
            <person name="Olsen G.J."/>
            <person name="Swanson R.V."/>
        </authorList>
    </citation>
    <scope>NUCLEOTIDE SEQUENCE [LARGE SCALE GENOMIC DNA]</scope>
    <source>
        <strain>VF5</strain>
    </source>
</reference>
<name>RPOA_AQUAE</name>
<protein>
    <recommendedName>
        <fullName evidence="1">DNA-directed RNA polymerase subunit alpha</fullName>
        <shortName evidence="1">RNAP subunit alpha</shortName>
        <ecNumber evidence="1">2.7.7.6</ecNumber>
    </recommendedName>
    <alternativeName>
        <fullName evidence="1">RNA polymerase subunit alpha</fullName>
    </alternativeName>
    <alternativeName>
        <fullName evidence="1">Transcriptase subunit alpha</fullName>
    </alternativeName>
</protein>